<comment type="function">
    <text evidence="2">Probably part of an efflux pump system that contributes to adaptation to osmotic stress and resistance to colistin.</text>
</comment>
<comment type="subcellular location">
    <subcellularLocation>
        <location evidence="4">Cell inner membrane</location>
        <topology evidence="1">Single-pass membrane protein</topology>
    </subcellularLocation>
</comment>
<comment type="induction">
    <text evidence="2">Cotranscribed with emrB. Induced during osmotic stress.</text>
</comment>
<comment type="similarity">
    <text evidence="4">Belongs to the membrane fusion protein (MFP) (TC 8.A.1) family.</text>
</comment>
<comment type="sequence caution" evidence="4">
    <conflict type="erroneous termination">
        <sequence resource="EMBL-CDS" id="ABO12200"/>
    </conflict>
    <text>Truncated C-terminus.</text>
</comment>
<keyword id="KW-0046">Antibiotic resistance</keyword>
<keyword id="KW-0997">Cell inner membrane</keyword>
<keyword id="KW-1003">Cell membrane</keyword>
<keyword id="KW-0175">Coiled coil</keyword>
<keyword id="KW-0472">Membrane</keyword>
<keyword id="KW-0812">Transmembrane</keyword>
<keyword id="KW-1133">Transmembrane helix</keyword>
<keyword id="KW-0813">Transport</keyword>
<gene>
    <name evidence="3" type="primary">emrA</name>
    <name evidence="5" type="ordered locus">A1S_1773</name>
</gene>
<organism>
    <name type="scientific">Acinetobacter baumannii (strain ATCC 17978 / DSM 105126 / CIP 53.77 / LMG 1025 / NCDC KC755 / 5377)</name>
    <dbReference type="NCBI Taxonomy" id="400667"/>
    <lineage>
        <taxon>Bacteria</taxon>
        <taxon>Pseudomonadati</taxon>
        <taxon>Pseudomonadota</taxon>
        <taxon>Gammaproteobacteria</taxon>
        <taxon>Moraxellales</taxon>
        <taxon>Moraxellaceae</taxon>
        <taxon>Acinetobacter</taxon>
        <taxon>Acinetobacter calcoaceticus/baumannii complex</taxon>
    </lineage>
</organism>
<accession>P0DPR6</accession>
<name>EMRA_ACIBT</name>
<proteinExistence type="evidence at transcript level"/>
<feature type="chain" id="PRO_0000445981" description="Colistin resistance protein EmrA">
    <location>
        <begin position="1"/>
        <end position="353"/>
    </location>
</feature>
<feature type="transmembrane region" description="Helical" evidence="1">
    <location>
        <begin position="21"/>
        <end position="41"/>
    </location>
</feature>
<feature type="coiled-coil region" evidence="1">
    <location>
        <begin position="132"/>
        <end position="204"/>
    </location>
</feature>
<reference key="1">
    <citation type="journal article" date="2007" name="Genes Dev.">
        <title>New insights into Acinetobacter baumannii pathogenesis revealed by high-density pyrosequencing and transposon mutagenesis.</title>
        <authorList>
            <person name="Smith M.G."/>
            <person name="Gianoulis T.A."/>
            <person name="Pukatzki S."/>
            <person name="Mekalanos J.J."/>
            <person name="Ornston L.N."/>
            <person name="Gerstein M."/>
            <person name="Snyder M."/>
        </authorList>
    </citation>
    <scope>NUCLEOTIDE SEQUENCE [LARGE SCALE GENOMIC DNA]</scope>
    <source>
        <strain>ATCC 17978 / DSM 105126 / CIP 53.77 / LMG 1025 / NCDC KC755 / 5377</strain>
    </source>
</reference>
<reference key="2">
    <citation type="journal article" date="2017" name="J. Microbiol.">
        <title>Contribution of EmrAB efflux pumps to colistin resistance in Acinetobacter baumannii.</title>
        <authorList>
            <person name="Lin M.F."/>
            <person name="Lin Y.Y."/>
            <person name="Lan C.Y."/>
        </authorList>
    </citation>
    <scope>FUNCTION</scope>
    <scope>INDUCTION</scope>
    <source>
        <strain>ATCC 17978 / DSM 105126 / CIP 53.77 / LMG 1025 / NCDC KC755 / 5377</strain>
    </source>
</reference>
<sequence length="353" mass="38896">MDNVAQLETDTNFQSRKKITWGVFSVLLLFLVAGILYYFFVYRFYQSTDNAYVQADVTWVMPKISGEVMELLINDNQVVKKGETLAVLDHRDYQARYDQARSVVSLKEAALGVQQQNEKSARSSIIEANSGVVAAQADLARLKKEFERYQDLLKDGVITRQNFEGIQSQYLTAQAQLSKAQAAVNAAEAQLGSLQASRAQLLADIQSSHANLNLYQVDLASSKVVSPVSGKIGSLAIQKGSRVSPQTRLMAIIPENSLYVQANFKETQIEKMHIGQKVKLKLDAYPSLNFTGKIESFSPASGATFSLMPPDNATGNFNKVVQRIPVRIAIDSSPHIDLVKPGMSVSATVDLRT</sequence>
<evidence type="ECO:0000255" key="1"/>
<evidence type="ECO:0000269" key="2">
    <source>
    </source>
</evidence>
<evidence type="ECO:0000303" key="3">
    <source>
    </source>
</evidence>
<evidence type="ECO:0000305" key="4"/>
<evidence type="ECO:0000312" key="5">
    <source>
        <dbReference type="EMBL" id="ABO12200.2"/>
    </source>
</evidence>
<dbReference type="EMBL" id="CP000521">
    <property type="protein sequence ID" value="ABO12200.2"/>
    <property type="status" value="ALT_TERM"/>
    <property type="molecule type" value="Genomic_DNA"/>
</dbReference>
<dbReference type="SMR" id="P0DPR6"/>
<dbReference type="KEGG" id="acb:A1S_1773"/>
<dbReference type="GO" id="GO:0005886">
    <property type="term" value="C:plasma membrane"/>
    <property type="evidence" value="ECO:0007669"/>
    <property type="project" value="UniProtKB-SubCell"/>
</dbReference>
<dbReference type="GO" id="GO:0046677">
    <property type="term" value="P:response to antibiotic"/>
    <property type="evidence" value="ECO:0007669"/>
    <property type="project" value="UniProtKB-KW"/>
</dbReference>
<dbReference type="GO" id="GO:0055085">
    <property type="term" value="P:transmembrane transport"/>
    <property type="evidence" value="ECO:0007669"/>
    <property type="project" value="InterPro"/>
</dbReference>
<dbReference type="Gene3D" id="2.40.30.170">
    <property type="match status" value="1"/>
</dbReference>
<dbReference type="Gene3D" id="2.40.50.100">
    <property type="match status" value="1"/>
</dbReference>
<dbReference type="Gene3D" id="1.10.287.470">
    <property type="entry name" value="Helix hairpin bin"/>
    <property type="match status" value="2"/>
</dbReference>
<dbReference type="InterPro" id="IPR043602">
    <property type="entry name" value="CusB-like_dom_1"/>
</dbReference>
<dbReference type="InterPro" id="IPR050739">
    <property type="entry name" value="MFP"/>
</dbReference>
<dbReference type="PANTHER" id="PTHR30386">
    <property type="entry name" value="MEMBRANE FUSION SUBUNIT OF EMRAB-TOLC MULTIDRUG EFFLUX PUMP"/>
    <property type="match status" value="1"/>
</dbReference>
<dbReference type="PANTHER" id="PTHR30386:SF24">
    <property type="entry name" value="MULTIDRUG RESISTANCE EFFLUX PUMP"/>
    <property type="match status" value="1"/>
</dbReference>
<dbReference type="Pfam" id="PF00529">
    <property type="entry name" value="CusB_dom_1"/>
    <property type="match status" value="1"/>
</dbReference>
<dbReference type="Pfam" id="PF13437">
    <property type="entry name" value="HlyD_3"/>
    <property type="match status" value="1"/>
</dbReference>
<dbReference type="SUPFAM" id="SSF111369">
    <property type="entry name" value="HlyD-like secretion proteins"/>
    <property type="match status" value="3"/>
</dbReference>
<protein>
    <recommendedName>
        <fullName evidence="4">Colistin resistance protein EmrA</fullName>
    </recommendedName>
</protein>